<accession>A4T9U9</accession>
<keyword id="KW-0687">Ribonucleoprotein</keyword>
<keyword id="KW-0689">Ribosomal protein</keyword>
<keyword id="KW-0694">RNA-binding</keyword>
<keyword id="KW-0699">rRNA-binding</keyword>
<organism>
    <name type="scientific">Mycolicibacterium gilvum (strain PYR-GCK)</name>
    <name type="common">Mycobacterium gilvum (strain PYR-GCK)</name>
    <dbReference type="NCBI Taxonomy" id="350054"/>
    <lineage>
        <taxon>Bacteria</taxon>
        <taxon>Bacillati</taxon>
        <taxon>Actinomycetota</taxon>
        <taxon>Actinomycetes</taxon>
        <taxon>Mycobacteriales</taxon>
        <taxon>Mycobacteriaceae</taxon>
        <taxon>Mycolicibacterium</taxon>
    </lineage>
</organism>
<proteinExistence type="inferred from homology"/>
<feature type="chain" id="PRO_1000080080" description="Large ribosomal subunit protein bL20">
    <location>
        <begin position="1"/>
        <end position="129"/>
    </location>
</feature>
<reference key="1">
    <citation type="submission" date="2007-04" db="EMBL/GenBank/DDBJ databases">
        <title>Complete sequence of chromosome of Mycobacterium gilvum PYR-GCK.</title>
        <authorList>
            <consortium name="US DOE Joint Genome Institute"/>
            <person name="Copeland A."/>
            <person name="Lucas S."/>
            <person name="Lapidus A."/>
            <person name="Barry K."/>
            <person name="Detter J.C."/>
            <person name="Glavina del Rio T."/>
            <person name="Hammon N."/>
            <person name="Israni S."/>
            <person name="Dalin E."/>
            <person name="Tice H."/>
            <person name="Pitluck S."/>
            <person name="Chain P."/>
            <person name="Malfatti S."/>
            <person name="Shin M."/>
            <person name="Vergez L."/>
            <person name="Schmutz J."/>
            <person name="Larimer F."/>
            <person name="Land M."/>
            <person name="Hauser L."/>
            <person name="Kyrpides N."/>
            <person name="Mikhailova N."/>
            <person name="Miller C."/>
            <person name="Richardson P."/>
        </authorList>
    </citation>
    <scope>NUCLEOTIDE SEQUENCE [LARGE SCALE GENOMIC DNA]</scope>
    <source>
        <strain>PYR-GCK</strain>
    </source>
</reference>
<comment type="function">
    <text evidence="1">Binds directly to 23S ribosomal RNA and is necessary for the in vitro assembly process of the 50S ribosomal subunit. It is not involved in the protein synthesizing functions of that subunit.</text>
</comment>
<comment type="similarity">
    <text evidence="1">Belongs to the bacterial ribosomal protein bL20 family.</text>
</comment>
<sequence>MARVKRALNAQKKRRTVLKASKGYRGQRSRLYRKAKEQQLHSLTYAYRDRKARKGDFRKLWITRINAAARLNGITYNRLIQGLKAAGVEVDRKNLAEIAVSDAAAFAALAEVAKAALPADVNAPSGEAA</sequence>
<dbReference type="EMBL" id="CP000656">
    <property type="protein sequence ID" value="ABP46014.1"/>
    <property type="molecule type" value="Genomic_DNA"/>
</dbReference>
<dbReference type="SMR" id="A4T9U9"/>
<dbReference type="STRING" id="350054.Mflv_3540"/>
<dbReference type="KEGG" id="mgi:Mflv_3540"/>
<dbReference type="eggNOG" id="COG0292">
    <property type="taxonomic scope" value="Bacteria"/>
</dbReference>
<dbReference type="HOGENOM" id="CLU_123265_0_0_11"/>
<dbReference type="OrthoDB" id="9808966at2"/>
<dbReference type="GO" id="GO:1990904">
    <property type="term" value="C:ribonucleoprotein complex"/>
    <property type="evidence" value="ECO:0007669"/>
    <property type="project" value="UniProtKB-KW"/>
</dbReference>
<dbReference type="GO" id="GO:0005840">
    <property type="term" value="C:ribosome"/>
    <property type="evidence" value="ECO:0007669"/>
    <property type="project" value="UniProtKB-KW"/>
</dbReference>
<dbReference type="GO" id="GO:0019843">
    <property type="term" value="F:rRNA binding"/>
    <property type="evidence" value="ECO:0007669"/>
    <property type="project" value="UniProtKB-UniRule"/>
</dbReference>
<dbReference type="GO" id="GO:0003735">
    <property type="term" value="F:structural constituent of ribosome"/>
    <property type="evidence" value="ECO:0007669"/>
    <property type="project" value="InterPro"/>
</dbReference>
<dbReference type="GO" id="GO:0000027">
    <property type="term" value="P:ribosomal large subunit assembly"/>
    <property type="evidence" value="ECO:0007669"/>
    <property type="project" value="UniProtKB-UniRule"/>
</dbReference>
<dbReference type="GO" id="GO:0006412">
    <property type="term" value="P:translation"/>
    <property type="evidence" value="ECO:0007669"/>
    <property type="project" value="InterPro"/>
</dbReference>
<dbReference type="CDD" id="cd07026">
    <property type="entry name" value="Ribosomal_L20"/>
    <property type="match status" value="1"/>
</dbReference>
<dbReference type="FunFam" id="1.10.1900.20:FF:000001">
    <property type="entry name" value="50S ribosomal protein L20"/>
    <property type="match status" value="1"/>
</dbReference>
<dbReference type="Gene3D" id="6.10.160.10">
    <property type="match status" value="1"/>
</dbReference>
<dbReference type="Gene3D" id="1.10.1900.20">
    <property type="entry name" value="Ribosomal protein L20"/>
    <property type="match status" value="1"/>
</dbReference>
<dbReference type="HAMAP" id="MF_00382">
    <property type="entry name" value="Ribosomal_bL20"/>
    <property type="match status" value="1"/>
</dbReference>
<dbReference type="InterPro" id="IPR005813">
    <property type="entry name" value="Ribosomal_bL20"/>
</dbReference>
<dbReference type="InterPro" id="IPR049946">
    <property type="entry name" value="RIBOSOMAL_L20_CS"/>
</dbReference>
<dbReference type="InterPro" id="IPR035566">
    <property type="entry name" value="Ribosomal_protein_bL20_C"/>
</dbReference>
<dbReference type="NCBIfam" id="TIGR01032">
    <property type="entry name" value="rplT_bact"/>
    <property type="match status" value="1"/>
</dbReference>
<dbReference type="PANTHER" id="PTHR10986">
    <property type="entry name" value="39S RIBOSOMAL PROTEIN L20"/>
    <property type="match status" value="1"/>
</dbReference>
<dbReference type="Pfam" id="PF00453">
    <property type="entry name" value="Ribosomal_L20"/>
    <property type="match status" value="1"/>
</dbReference>
<dbReference type="PRINTS" id="PR00062">
    <property type="entry name" value="RIBOSOMALL20"/>
</dbReference>
<dbReference type="SUPFAM" id="SSF74731">
    <property type="entry name" value="Ribosomal protein L20"/>
    <property type="match status" value="1"/>
</dbReference>
<dbReference type="PROSITE" id="PS00937">
    <property type="entry name" value="RIBOSOMAL_L20"/>
    <property type="match status" value="1"/>
</dbReference>
<evidence type="ECO:0000255" key="1">
    <source>
        <dbReference type="HAMAP-Rule" id="MF_00382"/>
    </source>
</evidence>
<evidence type="ECO:0000305" key="2"/>
<gene>
    <name evidence="1" type="primary">rplT</name>
    <name type="ordered locus">Mflv_3540</name>
</gene>
<name>RL20_MYCGI</name>
<protein>
    <recommendedName>
        <fullName evidence="1">Large ribosomal subunit protein bL20</fullName>
    </recommendedName>
    <alternativeName>
        <fullName evidence="2">50S ribosomal protein L20</fullName>
    </alternativeName>
</protein>